<accession>B4E5B1</accession>
<comment type="function">
    <text evidence="1">Forms part of the ribosomal stalk which helps the ribosome interact with GTP-bound translation factors. Is thus essential for accurate translation.</text>
</comment>
<comment type="subunit">
    <text evidence="1">Homodimer. Part of the ribosomal stalk of the 50S ribosomal subunit. Forms a multimeric L10(L12)X complex, where L10 forms an elongated spine to which 2 to 4 L12 dimers bind in a sequential fashion. Binds GTP-bound translation factors.</text>
</comment>
<comment type="similarity">
    <text evidence="1">Belongs to the bacterial ribosomal protein bL12 family.</text>
</comment>
<proteinExistence type="inferred from homology"/>
<organism>
    <name type="scientific">Burkholderia cenocepacia (strain ATCC BAA-245 / DSM 16553 / LMG 16656 / NCTC 13227 / J2315 / CF5610)</name>
    <name type="common">Burkholderia cepacia (strain J2315)</name>
    <dbReference type="NCBI Taxonomy" id="216591"/>
    <lineage>
        <taxon>Bacteria</taxon>
        <taxon>Pseudomonadati</taxon>
        <taxon>Pseudomonadota</taxon>
        <taxon>Betaproteobacteria</taxon>
        <taxon>Burkholderiales</taxon>
        <taxon>Burkholderiaceae</taxon>
        <taxon>Burkholderia</taxon>
        <taxon>Burkholderia cepacia complex</taxon>
    </lineage>
</organism>
<gene>
    <name evidence="1" type="primary">rplL</name>
    <name type="ordered locus">BceJ2315_02280</name>
    <name type="ORF">BCAL0225</name>
</gene>
<reference key="1">
    <citation type="journal article" date="2009" name="J. Bacteriol.">
        <title>The genome of Burkholderia cenocepacia J2315, an epidemic pathogen of cystic fibrosis patients.</title>
        <authorList>
            <person name="Holden M.T."/>
            <person name="Seth-Smith H.M."/>
            <person name="Crossman L.C."/>
            <person name="Sebaihia M."/>
            <person name="Bentley S.D."/>
            <person name="Cerdeno-Tarraga A.M."/>
            <person name="Thomson N.R."/>
            <person name="Bason N."/>
            <person name="Quail M.A."/>
            <person name="Sharp S."/>
            <person name="Cherevach I."/>
            <person name="Churcher C."/>
            <person name="Goodhead I."/>
            <person name="Hauser H."/>
            <person name="Holroyd N."/>
            <person name="Mungall K."/>
            <person name="Scott P."/>
            <person name="Walker D."/>
            <person name="White B."/>
            <person name="Rose H."/>
            <person name="Iversen P."/>
            <person name="Mil-Homens D."/>
            <person name="Rocha E.P."/>
            <person name="Fialho A.M."/>
            <person name="Baldwin A."/>
            <person name="Dowson C."/>
            <person name="Barrell B.G."/>
            <person name="Govan J.R."/>
            <person name="Vandamme P."/>
            <person name="Hart C.A."/>
            <person name="Mahenthiralingam E."/>
            <person name="Parkhill J."/>
        </authorList>
    </citation>
    <scope>NUCLEOTIDE SEQUENCE [LARGE SCALE GENOMIC DNA]</scope>
    <source>
        <strain>ATCC BAA-245 / DSM 16553 / LMG 16656 / NCTC 13227 / J2315 / CF5610</strain>
    </source>
</reference>
<protein>
    <recommendedName>
        <fullName evidence="1">Large ribosomal subunit protein bL12</fullName>
    </recommendedName>
    <alternativeName>
        <fullName evidence="2">50S ribosomal protein L7/L12</fullName>
    </alternativeName>
</protein>
<keyword id="KW-0687">Ribonucleoprotein</keyword>
<keyword id="KW-0689">Ribosomal protein</keyword>
<dbReference type="EMBL" id="AM747720">
    <property type="protein sequence ID" value="CAR50536.1"/>
    <property type="molecule type" value="Genomic_DNA"/>
</dbReference>
<dbReference type="RefSeq" id="WP_006482911.1">
    <property type="nucleotide sequence ID" value="NC_011000.1"/>
</dbReference>
<dbReference type="SMR" id="B4E5B1"/>
<dbReference type="GeneID" id="56556776"/>
<dbReference type="KEGG" id="bcj:BCAL0225"/>
<dbReference type="eggNOG" id="COG0222">
    <property type="taxonomic scope" value="Bacteria"/>
</dbReference>
<dbReference type="HOGENOM" id="CLU_086499_3_2_4"/>
<dbReference type="BioCyc" id="BCEN216591:G1G1V-267-MONOMER"/>
<dbReference type="Proteomes" id="UP000001035">
    <property type="component" value="Chromosome 1"/>
</dbReference>
<dbReference type="GO" id="GO:0022625">
    <property type="term" value="C:cytosolic large ribosomal subunit"/>
    <property type="evidence" value="ECO:0007669"/>
    <property type="project" value="TreeGrafter"/>
</dbReference>
<dbReference type="GO" id="GO:0003729">
    <property type="term" value="F:mRNA binding"/>
    <property type="evidence" value="ECO:0007669"/>
    <property type="project" value="TreeGrafter"/>
</dbReference>
<dbReference type="GO" id="GO:0003735">
    <property type="term" value="F:structural constituent of ribosome"/>
    <property type="evidence" value="ECO:0007669"/>
    <property type="project" value="InterPro"/>
</dbReference>
<dbReference type="GO" id="GO:0006412">
    <property type="term" value="P:translation"/>
    <property type="evidence" value="ECO:0007669"/>
    <property type="project" value="UniProtKB-UniRule"/>
</dbReference>
<dbReference type="CDD" id="cd00387">
    <property type="entry name" value="Ribosomal_L7_L12"/>
    <property type="match status" value="1"/>
</dbReference>
<dbReference type="FunFam" id="3.30.1390.10:FF:000001">
    <property type="entry name" value="50S ribosomal protein L7/L12"/>
    <property type="match status" value="1"/>
</dbReference>
<dbReference type="Gene3D" id="3.30.1390.10">
    <property type="match status" value="1"/>
</dbReference>
<dbReference type="Gene3D" id="1.20.5.710">
    <property type="entry name" value="Single helix bin"/>
    <property type="match status" value="1"/>
</dbReference>
<dbReference type="HAMAP" id="MF_00368">
    <property type="entry name" value="Ribosomal_bL12"/>
    <property type="match status" value="1"/>
</dbReference>
<dbReference type="InterPro" id="IPR000206">
    <property type="entry name" value="Ribosomal_bL12"/>
</dbReference>
<dbReference type="InterPro" id="IPR013823">
    <property type="entry name" value="Ribosomal_bL12_C"/>
</dbReference>
<dbReference type="InterPro" id="IPR014719">
    <property type="entry name" value="Ribosomal_bL12_C/ClpS-like"/>
</dbReference>
<dbReference type="InterPro" id="IPR008932">
    <property type="entry name" value="Ribosomal_bL12_oligo"/>
</dbReference>
<dbReference type="InterPro" id="IPR036235">
    <property type="entry name" value="Ribosomal_bL12_oligo_N_sf"/>
</dbReference>
<dbReference type="NCBIfam" id="TIGR00855">
    <property type="entry name" value="L12"/>
    <property type="match status" value="1"/>
</dbReference>
<dbReference type="PANTHER" id="PTHR45987">
    <property type="entry name" value="39S RIBOSOMAL PROTEIN L12"/>
    <property type="match status" value="1"/>
</dbReference>
<dbReference type="PANTHER" id="PTHR45987:SF4">
    <property type="entry name" value="LARGE RIBOSOMAL SUBUNIT PROTEIN BL12M"/>
    <property type="match status" value="1"/>
</dbReference>
<dbReference type="Pfam" id="PF00542">
    <property type="entry name" value="Ribosomal_L12"/>
    <property type="match status" value="1"/>
</dbReference>
<dbReference type="Pfam" id="PF16320">
    <property type="entry name" value="Ribosomal_L12_N"/>
    <property type="match status" value="1"/>
</dbReference>
<dbReference type="SUPFAM" id="SSF54736">
    <property type="entry name" value="ClpS-like"/>
    <property type="match status" value="1"/>
</dbReference>
<dbReference type="SUPFAM" id="SSF48300">
    <property type="entry name" value="Ribosomal protein L7/12, oligomerisation (N-terminal) domain"/>
    <property type="match status" value="1"/>
</dbReference>
<evidence type="ECO:0000255" key="1">
    <source>
        <dbReference type="HAMAP-Rule" id="MF_00368"/>
    </source>
</evidence>
<evidence type="ECO:0000305" key="2"/>
<sequence length="124" mass="12558">MAIAKEDILAAVEGMTVLELNELVKAFEEKFGVSAAAVAVAGPAGGGAAAAAEEKTEFTVVLAEAGANKVSVIKAVRELTGLGLKEAKDLVDGAPKPIKEGVDKAAAEEAKKKLEEAGAKVEVK</sequence>
<name>RL7_BURCJ</name>
<feature type="chain" id="PRO_1000121403" description="Large ribosomal subunit protein bL12">
    <location>
        <begin position="1"/>
        <end position="124"/>
    </location>
</feature>